<sequence length="302" mass="33376">MNNERLRRTMMFVPGNNPAMVKDAGIFGADSIMFDLEDAVSLAEKDSARYLVYEALQTVDYGSSELVVRINGLDTPFYKNDIKAMVKAGIDVIRLPKVETAAMMHELESLITDAEKEFGRPVGTTHMMAAIESALGVVNAVEIANASDRMIGIALSAEDYTTDMKTHRYPDGQELLYARNVILHAARAAGIAAFDTVFTNLNDEEGFYRETQLIHQLGFDGKSLINPRQIEMVNKVYAPTEKEINNAQNVIAAIEEAKQKGSGVISMNGQMVDRPVVLRAQRVMKLANANHLVDSEGNYIEK</sequence>
<reference key="1">
    <citation type="journal article" date="1998" name="J. Bacteriol.">
        <title>Purification of Leuconostoc mesenteroides citrate lyase and cloning and characterization of the citCDEFG gene cluster.</title>
        <authorList>
            <person name="Bekal S."/>
            <person name="van Beeumen J."/>
            <person name="Samyn B."/>
            <person name="Garmyn D."/>
            <person name="Henini S."/>
            <person name="Divies C."/>
            <person name="Prevost H."/>
        </authorList>
    </citation>
    <scope>NUCLEOTIDE SEQUENCE [GENOMIC DNA]</scope>
    <source>
        <strain>195</strain>
    </source>
</reference>
<feature type="chain" id="PRO_0000089760" description="Citrate lyase subunit beta">
    <location>
        <begin position="1"/>
        <end position="302"/>
    </location>
</feature>
<feature type="binding site" evidence="1">
    <location>
        <position position="69"/>
    </location>
    <ligand>
        <name>substrate</name>
    </ligand>
</feature>
<feature type="binding site" evidence="1">
    <location>
        <position position="132"/>
    </location>
    <ligand>
        <name>Mg(2+)</name>
        <dbReference type="ChEBI" id="CHEBI:18420"/>
    </ligand>
</feature>
<feature type="binding site" evidence="1">
    <location>
        <position position="132"/>
    </location>
    <ligand>
        <name>substrate</name>
    </ligand>
</feature>
<feature type="binding site" evidence="1">
    <location>
        <position position="159"/>
    </location>
    <ligand>
        <name>Mg(2+)</name>
        <dbReference type="ChEBI" id="CHEBI:18420"/>
    </ligand>
</feature>
<gene>
    <name type="primary">citE</name>
</gene>
<evidence type="ECO:0000250" key="1"/>
<evidence type="ECO:0000305" key="2"/>
<proteinExistence type="inferred from homology"/>
<accession>O53078</accession>
<name>CITE_LEUMC</name>
<comment type="function">
    <text evidence="1">Represents a citryl-ACP lyase.</text>
</comment>
<comment type="catalytic activity">
    <reaction>
        <text>citrate = oxaloacetate + acetate</text>
        <dbReference type="Rhea" id="RHEA:10760"/>
        <dbReference type="ChEBI" id="CHEBI:16452"/>
        <dbReference type="ChEBI" id="CHEBI:16947"/>
        <dbReference type="ChEBI" id="CHEBI:30089"/>
        <dbReference type="EC" id="4.1.3.6"/>
    </reaction>
</comment>
<comment type="catalytic activity">
    <reaction>
        <text>(3S)-citryl-CoA = oxaloacetate + acetyl-CoA</text>
        <dbReference type="Rhea" id="RHEA:20812"/>
        <dbReference type="ChEBI" id="CHEBI:16452"/>
        <dbReference type="ChEBI" id="CHEBI:57288"/>
        <dbReference type="ChEBI" id="CHEBI:57321"/>
        <dbReference type="EC" id="4.1.3.34"/>
    </reaction>
</comment>
<comment type="cofactor">
    <cofactor evidence="1">
        <name>Mg(2+)</name>
        <dbReference type="ChEBI" id="CHEBI:18420"/>
    </cofactor>
    <text evidence="1">Binds 1 Mg(2+) ion per subunit.</text>
</comment>
<comment type="subunit">
    <text evidence="1">Oligomer with a subunit composition of (alpha,beta,gamma)6.</text>
</comment>
<comment type="subcellular location">
    <subcellularLocation>
        <location>Cytoplasm</location>
    </subcellularLocation>
</comment>
<comment type="similarity">
    <text evidence="2">Belongs to the HpcH/HpaI aldolase family. Citrate lyase beta subunit subfamily.</text>
</comment>
<organism>
    <name type="scientific">Leuconostoc mesenteroides subsp. cremoris</name>
    <dbReference type="NCBI Taxonomy" id="33965"/>
    <lineage>
        <taxon>Bacteria</taxon>
        <taxon>Bacillati</taxon>
        <taxon>Bacillota</taxon>
        <taxon>Bacilli</taxon>
        <taxon>Lactobacillales</taxon>
        <taxon>Lactobacillaceae</taxon>
        <taxon>Leuconostoc</taxon>
    </lineage>
</organism>
<keyword id="KW-0963">Cytoplasm</keyword>
<keyword id="KW-0456">Lyase</keyword>
<keyword id="KW-0460">Magnesium</keyword>
<keyword id="KW-0479">Metal-binding</keyword>
<dbReference type="EC" id="4.1.3.6"/>
<dbReference type="EC" id="4.1.3.34"/>
<dbReference type="EMBL" id="Y10621">
    <property type="protein sequence ID" value="CAA71632.1"/>
    <property type="molecule type" value="Genomic_DNA"/>
</dbReference>
<dbReference type="RefSeq" id="WP_050892381.1">
    <property type="nucleotide sequence ID" value="NZ_LAYV01000030.1"/>
</dbReference>
<dbReference type="SMR" id="O53078"/>
<dbReference type="PATRIC" id="fig|33965.3.peg.1361"/>
<dbReference type="GO" id="GO:0009346">
    <property type="term" value="C:ATP-independent citrate lyase complex"/>
    <property type="evidence" value="ECO:0007669"/>
    <property type="project" value="InterPro"/>
</dbReference>
<dbReference type="GO" id="GO:0005737">
    <property type="term" value="C:cytoplasm"/>
    <property type="evidence" value="ECO:0007669"/>
    <property type="project" value="UniProtKB-SubCell"/>
</dbReference>
<dbReference type="GO" id="GO:0008815">
    <property type="term" value="F:citrate (pro-3S)-lyase activity"/>
    <property type="evidence" value="ECO:0007669"/>
    <property type="project" value="UniProtKB-EC"/>
</dbReference>
<dbReference type="GO" id="GO:0008816">
    <property type="term" value="F:citryl-CoA lyase activity"/>
    <property type="evidence" value="ECO:0007669"/>
    <property type="project" value="UniProtKB-EC"/>
</dbReference>
<dbReference type="GO" id="GO:0000287">
    <property type="term" value="F:magnesium ion binding"/>
    <property type="evidence" value="ECO:0007669"/>
    <property type="project" value="TreeGrafter"/>
</dbReference>
<dbReference type="GO" id="GO:0006084">
    <property type="term" value="P:acetyl-CoA metabolic process"/>
    <property type="evidence" value="ECO:0007669"/>
    <property type="project" value="InterPro"/>
</dbReference>
<dbReference type="GO" id="GO:0006107">
    <property type="term" value="P:oxaloacetate metabolic process"/>
    <property type="evidence" value="ECO:0007669"/>
    <property type="project" value="TreeGrafter"/>
</dbReference>
<dbReference type="FunFam" id="3.20.20.60:FF:000008">
    <property type="entry name" value="Citrate (Pro-3S)-lyase subunit beta"/>
    <property type="match status" value="1"/>
</dbReference>
<dbReference type="Gene3D" id="3.20.20.60">
    <property type="entry name" value="Phosphoenolpyruvate-binding domains"/>
    <property type="match status" value="1"/>
</dbReference>
<dbReference type="InterPro" id="IPR005000">
    <property type="entry name" value="Aldolase/citrate-lyase_domain"/>
</dbReference>
<dbReference type="InterPro" id="IPR011206">
    <property type="entry name" value="Citrate_lyase_beta/mcl1/mcl2"/>
</dbReference>
<dbReference type="InterPro" id="IPR006475">
    <property type="entry name" value="Citrate_lyase_beta_bac"/>
</dbReference>
<dbReference type="InterPro" id="IPR015813">
    <property type="entry name" value="Pyrv/PenolPyrv_kinase-like_dom"/>
</dbReference>
<dbReference type="InterPro" id="IPR040442">
    <property type="entry name" value="Pyrv_kinase-like_dom_sf"/>
</dbReference>
<dbReference type="NCBIfam" id="TIGR01588">
    <property type="entry name" value="citE"/>
    <property type="match status" value="1"/>
</dbReference>
<dbReference type="PANTHER" id="PTHR32308:SF10">
    <property type="entry name" value="CITRATE LYASE SUBUNIT BETA"/>
    <property type="match status" value="1"/>
</dbReference>
<dbReference type="PANTHER" id="PTHR32308">
    <property type="entry name" value="LYASE BETA SUBUNIT, PUTATIVE (AFU_ORTHOLOGUE AFUA_4G13030)-RELATED"/>
    <property type="match status" value="1"/>
</dbReference>
<dbReference type="Pfam" id="PF03328">
    <property type="entry name" value="HpcH_HpaI"/>
    <property type="match status" value="1"/>
</dbReference>
<dbReference type="PIRSF" id="PIRSF015582">
    <property type="entry name" value="Cit_lyase_B"/>
    <property type="match status" value="1"/>
</dbReference>
<dbReference type="SUPFAM" id="SSF51621">
    <property type="entry name" value="Phosphoenolpyruvate/pyruvate domain"/>
    <property type="match status" value="1"/>
</dbReference>
<protein>
    <recommendedName>
        <fullName>Citrate lyase subunit beta</fullName>
        <shortName>Citrase beta chain</shortName>
        <ecNumber>4.1.3.6</ecNumber>
    </recommendedName>
    <alternativeName>
        <fullName>Citrate (pro-3S)-lyase subunit beta</fullName>
    </alternativeName>
    <alternativeName>
        <fullName>Citryl-CoA lyase subunit</fullName>
        <ecNumber>4.1.3.34</ecNumber>
    </alternativeName>
</protein>